<accession>Q971A9</accession>
<organism>
    <name type="scientific">Sulfurisphaera tokodaii (strain DSM 16993 / JCM 10545 / NBRC 100140 / 7)</name>
    <name type="common">Sulfolobus tokodaii</name>
    <dbReference type="NCBI Taxonomy" id="273063"/>
    <lineage>
        <taxon>Archaea</taxon>
        <taxon>Thermoproteota</taxon>
        <taxon>Thermoprotei</taxon>
        <taxon>Sulfolobales</taxon>
        <taxon>Sulfolobaceae</taxon>
        <taxon>Sulfurisphaera</taxon>
    </lineage>
</organism>
<keyword id="KW-0028">Amino-acid biosynthesis</keyword>
<keyword id="KW-0100">Branched-chain amino acid biosynthesis</keyword>
<keyword id="KW-0460">Magnesium</keyword>
<keyword id="KW-0479">Metal-binding</keyword>
<keyword id="KW-0521">NADP</keyword>
<keyword id="KW-0560">Oxidoreductase</keyword>
<keyword id="KW-1185">Reference proteome</keyword>
<evidence type="ECO:0000255" key="1">
    <source>
        <dbReference type="HAMAP-Rule" id="MF_00435"/>
    </source>
</evidence>
<evidence type="ECO:0000255" key="2">
    <source>
        <dbReference type="PROSITE-ProRule" id="PRU01197"/>
    </source>
</evidence>
<evidence type="ECO:0000255" key="3">
    <source>
        <dbReference type="PROSITE-ProRule" id="PRU01198"/>
    </source>
</evidence>
<sequence length="332" mass="37034">MAKVYIDKDASLDPIKDKTIAVLGYGSQGRAWALNLRDSGLKVLVGLEREGNSWKVAESDGFNPMHTEDAVKKSDIVIFLVPDMVQRYVYRERVAPYLRDGMDLVFAHGFNIHYKLIEPPKTVDVYMIAPKGPGPIVREYFAKGGGVPALVAVHQNYSGKAFEKALAIAKALGATRAGVIETTFKEETETDLFGEQVDLVGGITQLMRTAFQVLVEAGYQPEIAYYETINEMKMIVDLIYEKGFTGMLKAVSETAKYGGFTAGKYVINEDVKKRMKEVLDRIRSGKFAEEWIEEYNKGAPTLVNGMKEVENSLEEQVGRQIREISLRGKPKS</sequence>
<protein>
    <recommendedName>
        <fullName evidence="1">Ketol-acid reductoisomerase (NADP(+))</fullName>
        <shortName evidence="1">KARI</shortName>
        <ecNumber evidence="1">1.1.1.86</ecNumber>
    </recommendedName>
    <alternativeName>
        <fullName evidence="1">Acetohydroxy-acid isomeroreductase</fullName>
        <shortName evidence="1">AHIR</shortName>
    </alternativeName>
    <alternativeName>
        <fullName evidence="1">Alpha-keto-beta-hydroxylacyl reductoisomerase</fullName>
    </alternativeName>
    <alternativeName>
        <fullName evidence="1">Ketol-acid reductoisomerase type 1</fullName>
    </alternativeName>
    <alternativeName>
        <fullName evidence="1">Ketol-acid reductoisomerase type I</fullName>
    </alternativeName>
</protein>
<feature type="chain" id="PRO_0000151403" description="Ketol-acid reductoisomerase (NADP(+))">
    <location>
        <begin position="1"/>
        <end position="332"/>
    </location>
</feature>
<feature type="domain" description="KARI N-terminal Rossmann" evidence="2">
    <location>
        <begin position="2"/>
        <end position="182"/>
    </location>
</feature>
<feature type="domain" description="KARI C-terminal knotted" evidence="3">
    <location>
        <begin position="183"/>
        <end position="328"/>
    </location>
</feature>
<feature type="active site" evidence="1">
    <location>
        <position position="108"/>
    </location>
</feature>
<feature type="binding site" evidence="1">
    <location>
        <begin position="25"/>
        <end position="28"/>
    </location>
    <ligand>
        <name>NADP(+)</name>
        <dbReference type="ChEBI" id="CHEBI:58349"/>
    </ligand>
</feature>
<feature type="binding site" evidence="1">
    <location>
        <position position="53"/>
    </location>
    <ligand>
        <name>NADP(+)</name>
        <dbReference type="ChEBI" id="CHEBI:58349"/>
    </ligand>
</feature>
<feature type="binding site" evidence="1">
    <location>
        <begin position="83"/>
        <end position="86"/>
    </location>
    <ligand>
        <name>NADP(+)</name>
        <dbReference type="ChEBI" id="CHEBI:58349"/>
    </ligand>
</feature>
<feature type="binding site" evidence="1">
    <location>
        <position position="134"/>
    </location>
    <ligand>
        <name>NADP(+)</name>
        <dbReference type="ChEBI" id="CHEBI:58349"/>
    </ligand>
</feature>
<feature type="binding site" evidence="1">
    <location>
        <position position="191"/>
    </location>
    <ligand>
        <name>Mg(2+)</name>
        <dbReference type="ChEBI" id="CHEBI:18420"/>
        <label>1</label>
    </ligand>
</feature>
<feature type="binding site" evidence="1">
    <location>
        <position position="191"/>
    </location>
    <ligand>
        <name>Mg(2+)</name>
        <dbReference type="ChEBI" id="CHEBI:18420"/>
        <label>2</label>
    </ligand>
</feature>
<feature type="binding site" evidence="1">
    <location>
        <position position="195"/>
    </location>
    <ligand>
        <name>Mg(2+)</name>
        <dbReference type="ChEBI" id="CHEBI:18420"/>
        <label>1</label>
    </ligand>
</feature>
<feature type="binding site" evidence="1">
    <location>
        <position position="227"/>
    </location>
    <ligand>
        <name>Mg(2+)</name>
        <dbReference type="ChEBI" id="CHEBI:18420"/>
        <label>2</label>
    </ligand>
</feature>
<feature type="binding site" evidence="1">
    <location>
        <position position="231"/>
    </location>
    <ligand>
        <name>Mg(2+)</name>
        <dbReference type="ChEBI" id="CHEBI:18420"/>
        <label>2</label>
    </ligand>
</feature>
<feature type="binding site" evidence="1">
    <location>
        <position position="252"/>
    </location>
    <ligand>
        <name>substrate</name>
    </ligand>
</feature>
<reference key="1">
    <citation type="journal article" date="2001" name="DNA Res.">
        <title>Complete genome sequence of an aerobic thermoacidophilic Crenarchaeon, Sulfolobus tokodaii strain7.</title>
        <authorList>
            <person name="Kawarabayasi Y."/>
            <person name="Hino Y."/>
            <person name="Horikawa H."/>
            <person name="Jin-no K."/>
            <person name="Takahashi M."/>
            <person name="Sekine M."/>
            <person name="Baba S."/>
            <person name="Ankai A."/>
            <person name="Kosugi H."/>
            <person name="Hosoyama A."/>
            <person name="Fukui S."/>
            <person name="Nagai Y."/>
            <person name="Nishijima K."/>
            <person name="Otsuka R."/>
            <person name="Nakazawa H."/>
            <person name="Takamiya M."/>
            <person name="Kato Y."/>
            <person name="Yoshizawa T."/>
            <person name="Tanaka T."/>
            <person name="Kudoh Y."/>
            <person name="Yamazaki J."/>
            <person name="Kushida N."/>
            <person name="Oguchi A."/>
            <person name="Aoki K."/>
            <person name="Masuda S."/>
            <person name="Yanagii M."/>
            <person name="Nishimura M."/>
            <person name="Yamagishi A."/>
            <person name="Oshima T."/>
            <person name="Kikuchi H."/>
        </authorList>
    </citation>
    <scope>NUCLEOTIDE SEQUENCE [LARGE SCALE GENOMIC DNA]</scope>
    <source>
        <strain>DSM 16993 / JCM 10545 / NBRC 100140 / 7</strain>
    </source>
</reference>
<gene>
    <name evidence="1" type="primary">ilvC</name>
    <name type="ordered locus">STK_14450</name>
</gene>
<comment type="function">
    <text evidence="1">Involved in the biosynthesis of branched-chain amino acids (BCAA). Catalyzes an alkyl-migration followed by a ketol-acid reduction of (S)-2-acetolactate (S2AL) to yield (R)-2,3-dihydroxy-isovalerate. In the isomerase reaction, S2AL is rearranged via a Mg-dependent methyl migration to produce 3-hydroxy-3-methyl-2-ketobutyrate (HMKB). In the reductase reaction, this 2-ketoacid undergoes a metal-dependent reduction by NADPH to yield (R)-2,3-dihydroxy-isovalerate.</text>
</comment>
<comment type="catalytic activity">
    <reaction evidence="1">
        <text>(2R)-2,3-dihydroxy-3-methylbutanoate + NADP(+) = (2S)-2-acetolactate + NADPH + H(+)</text>
        <dbReference type="Rhea" id="RHEA:22068"/>
        <dbReference type="ChEBI" id="CHEBI:15378"/>
        <dbReference type="ChEBI" id="CHEBI:49072"/>
        <dbReference type="ChEBI" id="CHEBI:57783"/>
        <dbReference type="ChEBI" id="CHEBI:58349"/>
        <dbReference type="ChEBI" id="CHEBI:58476"/>
        <dbReference type="EC" id="1.1.1.86"/>
    </reaction>
</comment>
<comment type="catalytic activity">
    <reaction evidence="1">
        <text>(2R,3R)-2,3-dihydroxy-3-methylpentanoate + NADP(+) = (S)-2-ethyl-2-hydroxy-3-oxobutanoate + NADPH + H(+)</text>
        <dbReference type="Rhea" id="RHEA:13493"/>
        <dbReference type="ChEBI" id="CHEBI:15378"/>
        <dbReference type="ChEBI" id="CHEBI:49256"/>
        <dbReference type="ChEBI" id="CHEBI:49258"/>
        <dbReference type="ChEBI" id="CHEBI:57783"/>
        <dbReference type="ChEBI" id="CHEBI:58349"/>
        <dbReference type="EC" id="1.1.1.86"/>
    </reaction>
</comment>
<comment type="cofactor">
    <cofactor evidence="1">
        <name>Mg(2+)</name>
        <dbReference type="ChEBI" id="CHEBI:18420"/>
    </cofactor>
    <text evidence="1">Binds 2 magnesium ions per subunit.</text>
</comment>
<comment type="pathway">
    <text evidence="1">Amino-acid biosynthesis; L-isoleucine biosynthesis; L-isoleucine from 2-oxobutanoate: step 2/4.</text>
</comment>
<comment type="pathway">
    <text evidence="1">Amino-acid biosynthesis; L-valine biosynthesis; L-valine from pyruvate: step 2/4.</text>
</comment>
<comment type="similarity">
    <text evidence="1">Belongs to the ketol-acid reductoisomerase family.</text>
</comment>
<proteinExistence type="inferred from homology"/>
<name>ILVC_SULTO</name>
<dbReference type="EC" id="1.1.1.86" evidence="1"/>
<dbReference type="EMBL" id="BA000023">
    <property type="protein sequence ID" value="BAB66514.1"/>
    <property type="molecule type" value="Genomic_DNA"/>
</dbReference>
<dbReference type="RefSeq" id="WP_010979492.1">
    <property type="nucleotide sequence ID" value="NC_003106.2"/>
</dbReference>
<dbReference type="SMR" id="Q971A9"/>
<dbReference type="STRING" id="273063.STK_14450"/>
<dbReference type="GeneID" id="1459478"/>
<dbReference type="KEGG" id="sto:STK_14450"/>
<dbReference type="PATRIC" id="fig|273063.9.peg.1647"/>
<dbReference type="eggNOG" id="arCOG04465">
    <property type="taxonomic scope" value="Archaea"/>
</dbReference>
<dbReference type="OrthoDB" id="6064at2157"/>
<dbReference type="UniPathway" id="UPA00047">
    <property type="reaction ID" value="UER00056"/>
</dbReference>
<dbReference type="UniPathway" id="UPA00049">
    <property type="reaction ID" value="UER00060"/>
</dbReference>
<dbReference type="Proteomes" id="UP000001015">
    <property type="component" value="Chromosome"/>
</dbReference>
<dbReference type="GO" id="GO:0004455">
    <property type="term" value="F:ketol-acid reductoisomerase activity"/>
    <property type="evidence" value="ECO:0007669"/>
    <property type="project" value="UniProtKB-UniRule"/>
</dbReference>
<dbReference type="GO" id="GO:0000287">
    <property type="term" value="F:magnesium ion binding"/>
    <property type="evidence" value="ECO:0007669"/>
    <property type="project" value="UniProtKB-UniRule"/>
</dbReference>
<dbReference type="GO" id="GO:0050661">
    <property type="term" value="F:NADP binding"/>
    <property type="evidence" value="ECO:0007669"/>
    <property type="project" value="InterPro"/>
</dbReference>
<dbReference type="GO" id="GO:0009097">
    <property type="term" value="P:isoleucine biosynthetic process"/>
    <property type="evidence" value="ECO:0007669"/>
    <property type="project" value="UniProtKB-UniRule"/>
</dbReference>
<dbReference type="GO" id="GO:0009099">
    <property type="term" value="P:L-valine biosynthetic process"/>
    <property type="evidence" value="ECO:0007669"/>
    <property type="project" value="UniProtKB-UniRule"/>
</dbReference>
<dbReference type="FunFam" id="3.40.50.720:FF:000023">
    <property type="entry name" value="Ketol-acid reductoisomerase (NADP(+))"/>
    <property type="match status" value="1"/>
</dbReference>
<dbReference type="Gene3D" id="6.10.240.10">
    <property type="match status" value="1"/>
</dbReference>
<dbReference type="Gene3D" id="3.40.50.720">
    <property type="entry name" value="NAD(P)-binding Rossmann-like Domain"/>
    <property type="match status" value="1"/>
</dbReference>
<dbReference type="HAMAP" id="MF_00435">
    <property type="entry name" value="IlvC"/>
    <property type="match status" value="1"/>
</dbReference>
<dbReference type="InterPro" id="IPR008927">
    <property type="entry name" value="6-PGluconate_DH-like_C_sf"/>
</dbReference>
<dbReference type="InterPro" id="IPR013023">
    <property type="entry name" value="KARI"/>
</dbReference>
<dbReference type="InterPro" id="IPR000506">
    <property type="entry name" value="KARI_C"/>
</dbReference>
<dbReference type="InterPro" id="IPR013116">
    <property type="entry name" value="KARI_N"/>
</dbReference>
<dbReference type="InterPro" id="IPR014359">
    <property type="entry name" value="KARI_prok"/>
</dbReference>
<dbReference type="InterPro" id="IPR036291">
    <property type="entry name" value="NAD(P)-bd_dom_sf"/>
</dbReference>
<dbReference type="NCBIfam" id="TIGR00465">
    <property type="entry name" value="ilvC"/>
    <property type="match status" value="1"/>
</dbReference>
<dbReference type="NCBIfam" id="NF004017">
    <property type="entry name" value="PRK05479.1"/>
    <property type="match status" value="1"/>
</dbReference>
<dbReference type="PANTHER" id="PTHR21371">
    <property type="entry name" value="KETOL-ACID REDUCTOISOMERASE, MITOCHONDRIAL"/>
    <property type="match status" value="1"/>
</dbReference>
<dbReference type="PANTHER" id="PTHR21371:SF1">
    <property type="entry name" value="KETOL-ACID REDUCTOISOMERASE, MITOCHONDRIAL"/>
    <property type="match status" value="1"/>
</dbReference>
<dbReference type="Pfam" id="PF01450">
    <property type="entry name" value="KARI_C"/>
    <property type="match status" value="1"/>
</dbReference>
<dbReference type="Pfam" id="PF07991">
    <property type="entry name" value="KARI_N"/>
    <property type="match status" value="1"/>
</dbReference>
<dbReference type="PIRSF" id="PIRSF000116">
    <property type="entry name" value="IlvC_gammaproteo"/>
    <property type="match status" value="1"/>
</dbReference>
<dbReference type="SUPFAM" id="SSF48179">
    <property type="entry name" value="6-phosphogluconate dehydrogenase C-terminal domain-like"/>
    <property type="match status" value="1"/>
</dbReference>
<dbReference type="SUPFAM" id="SSF51735">
    <property type="entry name" value="NAD(P)-binding Rossmann-fold domains"/>
    <property type="match status" value="1"/>
</dbReference>
<dbReference type="PROSITE" id="PS51851">
    <property type="entry name" value="KARI_C"/>
    <property type="match status" value="1"/>
</dbReference>
<dbReference type="PROSITE" id="PS51850">
    <property type="entry name" value="KARI_N"/>
    <property type="match status" value="1"/>
</dbReference>